<evidence type="ECO:0000250" key="1"/>
<evidence type="ECO:0000255" key="2">
    <source>
        <dbReference type="HAMAP-Rule" id="MF_01540"/>
    </source>
</evidence>
<sequence>MSEKHPGPLVVEGKLSDAERMKLESNYLRGTIAEDLNDGLTGGFKGDNFLLIRFHGMYQQDDRDIRAERAAQKLEPRHAMLLRCRLPGGVITTTQWQAIDKFAADNTIYGSIRLTNRQTFQFHGILKKNVKPVHQMLHSVGLDALATANDMNRNVLCTSNPYESQLHAEAYEWAKKISEHLLPRTRAYAEIWLDQEKVATTDEEPILGATYLPRKFKTTVVIPPQNDIDLHANDMNFVAIAENGKLVGFNLLVGGGLSIEHGNKKTYARTASEFGYLPLEHTLAVAEAVVTTQRDWGNRTDRKNAKTKYTLERVGVDTFKEEVERRAGIKFEPIRPYEFTGRGDRIGWVKGIDNNWHLTLFIENGRILDYPGRPLKTGLLEIAKIHQGEFRITANQNLIIASVPESQKAKIEKLARDHGLMNAVSAQRENSMACVSFPTCPLAMAEAERFLPSFTDKVEAILEKHGIPDEHIVMRVTGCPNGCGRAMLAEIGLVGKAPGRYNLHLGGNRIGTRIPRMYQENITEPDILASLDQLIGRWAKEREAGEGFGDFTVRAGIIRPVLDPARDFWDNLNCRMASV</sequence>
<protein>
    <recommendedName>
        <fullName evidence="2">Sulfite reductase [NADPH] hemoprotein beta-component</fullName>
        <shortName evidence="2">SiR-HP</shortName>
        <shortName evidence="2">SiRHP</shortName>
        <ecNumber evidence="2">1.8.1.2</ecNumber>
    </recommendedName>
</protein>
<dbReference type="EC" id="1.8.1.2" evidence="2"/>
<dbReference type="EMBL" id="AE017220">
    <property type="protein sequence ID" value="AAX66784.1"/>
    <property type="molecule type" value="Genomic_DNA"/>
</dbReference>
<dbReference type="RefSeq" id="WP_011264375.1">
    <property type="nucleotide sequence ID" value="NC_006905.1"/>
</dbReference>
<dbReference type="SMR" id="Q57KH8"/>
<dbReference type="KEGG" id="sec:SCH_2878"/>
<dbReference type="HOGENOM" id="CLU_001975_3_2_6"/>
<dbReference type="UniPathway" id="UPA00140">
    <property type="reaction ID" value="UER00207"/>
</dbReference>
<dbReference type="Proteomes" id="UP000000538">
    <property type="component" value="Chromosome"/>
</dbReference>
<dbReference type="GO" id="GO:0009337">
    <property type="term" value="C:sulfite reductase complex (NADPH)"/>
    <property type="evidence" value="ECO:0007669"/>
    <property type="project" value="InterPro"/>
</dbReference>
<dbReference type="GO" id="GO:0051539">
    <property type="term" value="F:4 iron, 4 sulfur cluster binding"/>
    <property type="evidence" value="ECO:0007669"/>
    <property type="project" value="UniProtKB-KW"/>
</dbReference>
<dbReference type="GO" id="GO:0020037">
    <property type="term" value="F:heme binding"/>
    <property type="evidence" value="ECO:0007669"/>
    <property type="project" value="InterPro"/>
</dbReference>
<dbReference type="GO" id="GO:0046872">
    <property type="term" value="F:metal ion binding"/>
    <property type="evidence" value="ECO:0007669"/>
    <property type="project" value="UniProtKB-KW"/>
</dbReference>
<dbReference type="GO" id="GO:0050661">
    <property type="term" value="F:NADP binding"/>
    <property type="evidence" value="ECO:0007669"/>
    <property type="project" value="InterPro"/>
</dbReference>
<dbReference type="GO" id="GO:0050311">
    <property type="term" value="F:sulfite reductase (ferredoxin) activity"/>
    <property type="evidence" value="ECO:0007669"/>
    <property type="project" value="TreeGrafter"/>
</dbReference>
<dbReference type="GO" id="GO:0004783">
    <property type="term" value="F:sulfite reductase (NADPH) activity"/>
    <property type="evidence" value="ECO:0007669"/>
    <property type="project" value="UniProtKB-UniRule"/>
</dbReference>
<dbReference type="GO" id="GO:0019344">
    <property type="term" value="P:cysteine biosynthetic process"/>
    <property type="evidence" value="ECO:0007669"/>
    <property type="project" value="UniProtKB-KW"/>
</dbReference>
<dbReference type="GO" id="GO:0070814">
    <property type="term" value="P:hydrogen sulfide biosynthetic process"/>
    <property type="evidence" value="ECO:0007669"/>
    <property type="project" value="UniProtKB-UniRule"/>
</dbReference>
<dbReference type="GO" id="GO:0000103">
    <property type="term" value="P:sulfate assimilation"/>
    <property type="evidence" value="ECO:0007669"/>
    <property type="project" value="UniProtKB-UniRule"/>
</dbReference>
<dbReference type="FunFam" id="3.30.413.10:FF:000003">
    <property type="entry name" value="Sulfite reductase [NADPH] hemoprotein beta-component"/>
    <property type="match status" value="1"/>
</dbReference>
<dbReference type="FunFam" id="3.30.413.10:FF:000004">
    <property type="entry name" value="Sulfite reductase [NADPH] hemoprotein beta-component"/>
    <property type="match status" value="1"/>
</dbReference>
<dbReference type="Gene3D" id="3.30.413.10">
    <property type="entry name" value="Sulfite Reductase Hemoprotein, domain 1"/>
    <property type="match status" value="2"/>
</dbReference>
<dbReference type="HAMAP" id="MF_01540">
    <property type="entry name" value="CysI"/>
    <property type="match status" value="1"/>
</dbReference>
<dbReference type="InterPro" id="IPR011786">
    <property type="entry name" value="CysI"/>
</dbReference>
<dbReference type="InterPro" id="IPR005117">
    <property type="entry name" value="NiRdtase/SiRdtase_haem-b_fer"/>
</dbReference>
<dbReference type="InterPro" id="IPR036136">
    <property type="entry name" value="Nit/Sulf_reduc_fer-like_dom_sf"/>
</dbReference>
<dbReference type="InterPro" id="IPR006067">
    <property type="entry name" value="NO2/SO3_Rdtase_4Fe4S_dom"/>
</dbReference>
<dbReference type="InterPro" id="IPR045169">
    <property type="entry name" value="NO2/SO3_Rdtase_4Fe4S_prot"/>
</dbReference>
<dbReference type="InterPro" id="IPR045854">
    <property type="entry name" value="NO2/SO3_Rdtase_4Fe4S_sf"/>
</dbReference>
<dbReference type="InterPro" id="IPR006066">
    <property type="entry name" value="NO2/SO3_Rdtase_FeS/sirohaem_BS"/>
</dbReference>
<dbReference type="NCBIfam" id="TIGR02041">
    <property type="entry name" value="CysI"/>
    <property type="match status" value="1"/>
</dbReference>
<dbReference type="NCBIfam" id="NF010029">
    <property type="entry name" value="PRK13504.1"/>
    <property type="match status" value="1"/>
</dbReference>
<dbReference type="PANTHER" id="PTHR11493:SF47">
    <property type="entry name" value="SULFITE REDUCTASE [NADPH] SUBUNIT BETA"/>
    <property type="match status" value="1"/>
</dbReference>
<dbReference type="PANTHER" id="PTHR11493">
    <property type="entry name" value="SULFITE REDUCTASE [NADPH] SUBUNIT BETA-RELATED"/>
    <property type="match status" value="1"/>
</dbReference>
<dbReference type="Pfam" id="PF01077">
    <property type="entry name" value="NIR_SIR"/>
    <property type="match status" value="1"/>
</dbReference>
<dbReference type="Pfam" id="PF03460">
    <property type="entry name" value="NIR_SIR_ferr"/>
    <property type="match status" value="2"/>
</dbReference>
<dbReference type="PRINTS" id="PR00397">
    <property type="entry name" value="SIROHAEM"/>
</dbReference>
<dbReference type="SUPFAM" id="SSF56014">
    <property type="entry name" value="Nitrite and sulphite reductase 4Fe-4S domain-like"/>
    <property type="match status" value="2"/>
</dbReference>
<dbReference type="SUPFAM" id="SSF55124">
    <property type="entry name" value="Nitrite/Sulfite reductase N-terminal domain-like"/>
    <property type="match status" value="2"/>
</dbReference>
<dbReference type="PROSITE" id="PS00365">
    <property type="entry name" value="NIR_SIR"/>
    <property type="match status" value="1"/>
</dbReference>
<keyword id="KW-0004">4Fe-4S</keyword>
<keyword id="KW-0028">Amino-acid biosynthesis</keyword>
<keyword id="KW-0198">Cysteine biosynthesis</keyword>
<keyword id="KW-0349">Heme</keyword>
<keyword id="KW-0408">Iron</keyword>
<keyword id="KW-0411">Iron-sulfur</keyword>
<keyword id="KW-0479">Metal-binding</keyword>
<keyword id="KW-0521">NADP</keyword>
<keyword id="KW-0560">Oxidoreductase</keyword>
<organism>
    <name type="scientific">Salmonella choleraesuis (strain SC-B67)</name>
    <dbReference type="NCBI Taxonomy" id="321314"/>
    <lineage>
        <taxon>Bacteria</taxon>
        <taxon>Pseudomonadati</taxon>
        <taxon>Pseudomonadota</taxon>
        <taxon>Gammaproteobacteria</taxon>
        <taxon>Enterobacterales</taxon>
        <taxon>Enterobacteriaceae</taxon>
        <taxon>Salmonella</taxon>
    </lineage>
</organism>
<feature type="initiator methionine" description="Removed" evidence="1">
    <location>
        <position position="1"/>
    </location>
</feature>
<feature type="chain" id="PRO_0000199905" description="Sulfite reductase [NADPH] hemoprotein beta-component">
    <location>
        <begin position="2"/>
        <end position="579"/>
    </location>
</feature>
<feature type="binding site" evidence="2">
    <location>
        <position position="434"/>
    </location>
    <ligand>
        <name>[4Fe-4S] cluster</name>
        <dbReference type="ChEBI" id="CHEBI:49883"/>
    </ligand>
</feature>
<feature type="binding site" evidence="2">
    <location>
        <position position="440"/>
    </location>
    <ligand>
        <name>[4Fe-4S] cluster</name>
        <dbReference type="ChEBI" id="CHEBI:49883"/>
    </ligand>
</feature>
<feature type="binding site" evidence="2">
    <location>
        <position position="479"/>
    </location>
    <ligand>
        <name>[4Fe-4S] cluster</name>
        <dbReference type="ChEBI" id="CHEBI:49883"/>
    </ligand>
</feature>
<feature type="binding site" evidence="2">
    <location>
        <position position="483"/>
    </location>
    <ligand>
        <name>[4Fe-4S] cluster</name>
        <dbReference type="ChEBI" id="CHEBI:49883"/>
    </ligand>
</feature>
<feature type="binding site" description="axial binding residue" evidence="2">
    <location>
        <position position="483"/>
    </location>
    <ligand>
        <name>siroheme</name>
        <dbReference type="ChEBI" id="CHEBI:60052"/>
    </ligand>
    <ligandPart>
        <name>Fe</name>
        <dbReference type="ChEBI" id="CHEBI:18248"/>
    </ligandPart>
</feature>
<proteinExistence type="inferred from homology"/>
<accession>Q57KH8</accession>
<gene>
    <name evidence="2" type="primary">cysI</name>
    <name type="ordered locus">SCH_2878</name>
</gene>
<comment type="function">
    <text evidence="2">Component of the sulfite reductase complex that catalyzes the 6-electron reduction of sulfite to sulfide. This is one of several activities required for the biosynthesis of L-cysteine from sulfate.</text>
</comment>
<comment type="catalytic activity">
    <reaction evidence="2">
        <text>hydrogen sulfide + 3 NADP(+) + 3 H2O = sulfite + 3 NADPH + 4 H(+)</text>
        <dbReference type="Rhea" id="RHEA:13801"/>
        <dbReference type="ChEBI" id="CHEBI:15377"/>
        <dbReference type="ChEBI" id="CHEBI:15378"/>
        <dbReference type="ChEBI" id="CHEBI:17359"/>
        <dbReference type="ChEBI" id="CHEBI:29919"/>
        <dbReference type="ChEBI" id="CHEBI:57783"/>
        <dbReference type="ChEBI" id="CHEBI:58349"/>
        <dbReference type="EC" id="1.8.1.2"/>
    </reaction>
</comment>
<comment type="cofactor">
    <cofactor evidence="2">
        <name>siroheme</name>
        <dbReference type="ChEBI" id="CHEBI:60052"/>
    </cofactor>
    <text evidence="2">Binds 1 siroheme per subunit.</text>
</comment>
<comment type="cofactor">
    <cofactor evidence="2">
        <name>[4Fe-4S] cluster</name>
        <dbReference type="ChEBI" id="CHEBI:49883"/>
    </cofactor>
    <text evidence="2">Binds 1 [4Fe-4S] cluster per subunit.</text>
</comment>
<comment type="pathway">
    <text evidence="2">Sulfur metabolism; hydrogen sulfide biosynthesis; hydrogen sulfide from sulfite (NADPH route): step 1/1.</text>
</comment>
<comment type="subunit">
    <text evidence="2">Alpha(8)-beta(8). The alpha component is a flavoprotein, the beta component is a hemoprotein.</text>
</comment>
<comment type="similarity">
    <text evidence="2">Belongs to the nitrite and sulfite reductase 4Fe-4S domain family.</text>
</comment>
<reference key="1">
    <citation type="journal article" date="2005" name="Nucleic Acids Res.">
        <title>The genome sequence of Salmonella enterica serovar Choleraesuis, a highly invasive and resistant zoonotic pathogen.</title>
        <authorList>
            <person name="Chiu C.-H."/>
            <person name="Tang P."/>
            <person name="Chu C."/>
            <person name="Hu S."/>
            <person name="Bao Q."/>
            <person name="Yu J."/>
            <person name="Chou Y.-Y."/>
            <person name="Wang H.-S."/>
            <person name="Lee Y.-S."/>
        </authorList>
    </citation>
    <scope>NUCLEOTIDE SEQUENCE [LARGE SCALE GENOMIC DNA]</scope>
    <source>
        <strain>SC-B67</strain>
    </source>
</reference>
<name>CYSI_SALCH</name>